<feature type="chain" id="PRO_0000238305" description="ATP synthase subunit alpha">
    <location>
        <begin position="1"/>
        <end position="513"/>
    </location>
</feature>
<feature type="binding site" evidence="1">
    <location>
        <begin position="169"/>
        <end position="176"/>
    </location>
    <ligand>
        <name>ATP</name>
        <dbReference type="ChEBI" id="CHEBI:30616"/>
    </ligand>
</feature>
<feature type="site" description="Required for activity" evidence="1">
    <location>
        <position position="373"/>
    </location>
</feature>
<keyword id="KW-0066">ATP synthesis</keyword>
<keyword id="KW-0067">ATP-binding</keyword>
<keyword id="KW-0997">Cell inner membrane</keyword>
<keyword id="KW-1003">Cell membrane</keyword>
<keyword id="KW-0139">CF(1)</keyword>
<keyword id="KW-0375">Hydrogen ion transport</keyword>
<keyword id="KW-0406">Ion transport</keyword>
<keyword id="KW-0472">Membrane</keyword>
<keyword id="KW-0547">Nucleotide-binding</keyword>
<keyword id="KW-1185">Reference proteome</keyword>
<keyword id="KW-1278">Translocase</keyword>
<keyword id="KW-0813">Transport</keyword>
<sequence>MQLNPSEISELIKSKIEGLSVTSEFRTQGTIVSLTDGIVRVHGLSDVMQGEMLEFPGGTFGLALNLERDSVGAVILGAYEHLKEGDIVKCTSRILEVPVGEALLGRVVNALGQPIDGKGPIAAEGTEPIEKIAPGVVWRKSVDQPVQTGLKSIDSMVPVGRGQRELIIGDRQTGKTAVAIDAIINQKGEDVICIYVAIGQKASSIANVVRKLEEVGAMAYTIVVVASASESAAMQYIAPYSGCTMGEYFRDKGQDALIVYDDLTKQAWAYRQISLLLRRPPGREAYPGDVFYLHSRLLERAARVNADYVEKATGGKVKGKTGSLTALPIIETQAGDVTAFVPTNVISITDGQIFLESDLFNAGIRPAINAGISVSRVGGAAQTKVIKKLGGGIRLALAQYRELAAFAQFASDLDEATRKQLERGKMATELMKQSQYATLKVSEMALTLFALNKGYFDDVDIKRALAFESALKSHIRSHHGAILDKIEASKELDAETEKALEAAIQEFKQNGTY</sequence>
<gene>
    <name evidence="1" type="primary">atpA</name>
    <name type="ordered locus">NE0204</name>
</gene>
<comment type="function">
    <text evidence="1">Produces ATP from ADP in the presence of a proton gradient across the membrane. The alpha chain is a regulatory subunit.</text>
</comment>
<comment type="catalytic activity">
    <reaction evidence="1">
        <text>ATP + H2O + 4 H(+)(in) = ADP + phosphate + 5 H(+)(out)</text>
        <dbReference type="Rhea" id="RHEA:57720"/>
        <dbReference type="ChEBI" id="CHEBI:15377"/>
        <dbReference type="ChEBI" id="CHEBI:15378"/>
        <dbReference type="ChEBI" id="CHEBI:30616"/>
        <dbReference type="ChEBI" id="CHEBI:43474"/>
        <dbReference type="ChEBI" id="CHEBI:456216"/>
        <dbReference type="EC" id="7.1.2.2"/>
    </reaction>
</comment>
<comment type="subunit">
    <text evidence="1">F-type ATPases have 2 components, CF(1) - the catalytic core - and CF(0) - the membrane proton channel. CF(1) has five subunits: alpha(3), beta(3), gamma(1), delta(1), epsilon(1). CF(0) has three main subunits: a(1), b(2) and c(9-12). The alpha and beta chains form an alternating ring which encloses part of the gamma chain. CF(1) is attached to CF(0) by a central stalk formed by the gamma and epsilon chains, while a peripheral stalk is formed by the delta and b chains.</text>
</comment>
<comment type="subcellular location">
    <subcellularLocation>
        <location evidence="1">Cell inner membrane</location>
        <topology evidence="1">Peripheral membrane protein</topology>
    </subcellularLocation>
</comment>
<comment type="similarity">
    <text evidence="1">Belongs to the ATPase alpha/beta chains family.</text>
</comment>
<accession>Q82XQ0</accession>
<dbReference type="EC" id="7.1.2.2" evidence="1"/>
<dbReference type="EMBL" id="AL954747">
    <property type="protein sequence ID" value="CAD84115.1"/>
    <property type="molecule type" value="Genomic_DNA"/>
</dbReference>
<dbReference type="RefSeq" id="WP_011110849.1">
    <property type="nucleotide sequence ID" value="NC_004757.1"/>
</dbReference>
<dbReference type="SMR" id="Q82XQ0"/>
<dbReference type="STRING" id="228410.NE0204"/>
<dbReference type="GeneID" id="87103411"/>
<dbReference type="KEGG" id="neu:NE0204"/>
<dbReference type="eggNOG" id="COG0056">
    <property type="taxonomic scope" value="Bacteria"/>
</dbReference>
<dbReference type="HOGENOM" id="CLU_010091_2_1_4"/>
<dbReference type="OrthoDB" id="9803053at2"/>
<dbReference type="PhylomeDB" id="Q82XQ0"/>
<dbReference type="Proteomes" id="UP000001416">
    <property type="component" value="Chromosome"/>
</dbReference>
<dbReference type="GO" id="GO:0005886">
    <property type="term" value="C:plasma membrane"/>
    <property type="evidence" value="ECO:0007669"/>
    <property type="project" value="UniProtKB-SubCell"/>
</dbReference>
<dbReference type="GO" id="GO:0045259">
    <property type="term" value="C:proton-transporting ATP synthase complex"/>
    <property type="evidence" value="ECO:0007669"/>
    <property type="project" value="UniProtKB-KW"/>
</dbReference>
<dbReference type="GO" id="GO:0043531">
    <property type="term" value="F:ADP binding"/>
    <property type="evidence" value="ECO:0007669"/>
    <property type="project" value="TreeGrafter"/>
</dbReference>
<dbReference type="GO" id="GO:0005524">
    <property type="term" value="F:ATP binding"/>
    <property type="evidence" value="ECO:0007669"/>
    <property type="project" value="UniProtKB-UniRule"/>
</dbReference>
<dbReference type="GO" id="GO:0046933">
    <property type="term" value="F:proton-transporting ATP synthase activity, rotational mechanism"/>
    <property type="evidence" value="ECO:0007669"/>
    <property type="project" value="UniProtKB-UniRule"/>
</dbReference>
<dbReference type="CDD" id="cd18113">
    <property type="entry name" value="ATP-synt_F1_alpha_C"/>
    <property type="match status" value="1"/>
</dbReference>
<dbReference type="CDD" id="cd18116">
    <property type="entry name" value="ATP-synt_F1_alpha_N"/>
    <property type="match status" value="1"/>
</dbReference>
<dbReference type="CDD" id="cd01132">
    <property type="entry name" value="F1-ATPase_alpha_CD"/>
    <property type="match status" value="1"/>
</dbReference>
<dbReference type="FunFam" id="1.20.150.20:FF:000001">
    <property type="entry name" value="ATP synthase subunit alpha"/>
    <property type="match status" value="1"/>
</dbReference>
<dbReference type="FunFam" id="2.40.30.20:FF:000001">
    <property type="entry name" value="ATP synthase subunit alpha"/>
    <property type="match status" value="1"/>
</dbReference>
<dbReference type="FunFam" id="3.40.50.300:FF:000002">
    <property type="entry name" value="ATP synthase subunit alpha"/>
    <property type="match status" value="1"/>
</dbReference>
<dbReference type="Gene3D" id="2.40.30.20">
    <property type="match status" value="1"/>
</dbReference>
<dbReference type="Gene3D" id="1.20.150.20">
    <property type="entry name" value="ATP synthase alpha/beta chain, C-terminal domain"/>
    <property type="match status" value="1"/>
</dbReference>
<dbReference type="Gene3D" id="3.40.50.300">
    <property type="entry name" value="P-loop containing nucleotide triphosphate hydrolases"/>
    <property type="match status" value="1"/>
</dbReference>
<dbReference type="HAMAP" id="MF_01346">
    <property type="entry name" value="ATP_synth_alpha_bact"/>
    <property type="match status" value="1"/>
</dbReference>
<dbReference type="InterPro" id="IPR023366">
    <property type="entry name" value="ATP_synth_asu-like_sf"/>
</dbReference>
<dbReference type="InterPro" id="IPR000793">
    <property type="entry name" value="ATP_synth_asu_C"/>
</dbReference>
<dbReference type="InterPro" id="IPR038376">
    <property type="entry name" value="ATP_synth_asu_C_sf"/>
</dbReference>
<dbReference type="InterPro" id="IPR033732">
    <property type="entry name" value="ATP_synth_F1_a_nt-bd_dom"/>
</dbReference>
<dbReference type="InterPro" id="IPR005294">
    <property type="entry name" value="ATP_synth_F1_asu"/>
</dbReference>
<dbReference type="InterPro" id="IPR020003">
    <property type="entry name" value="ATPase_a/bsu_AS"/>
</dbReference>
<dbReference type="InterPro" id="IPR004100">
    <property type="entry name" value="ATPase_F1/V1/A1_a/bsu_N"/>
</dbReference>
<dbReference type="InterPro" id="IPR036121">
    <property type="entry name" value="ATPase_F1/V1/A1_a/bsu_N_sf"/>
</dbReference>
<dbReference type="InterPro" id="IPR000194">
    <property type="entry name" value="ATPase_F1/V1/A1_a/bsu_nucl-bd"/>
</dbReference>
<dbReference type="InterPro" id="IPR027417">
    <property type="entry name" value="P-loop_NTPase"/>
</dbReference>
<dbReference type="NCBIfam" id="TIGR00962">
    <property type="entry name" value="atpA"/>
    <property type="match status" value="1"/>
</dbReference>
<dbReference type="NCBIfam" id="NF009884">
    <property type="entry name" value="PRK13343.1"/>
    <property type="match status" value="1"/>
</dbReference>
<dbReference type="PANTHER" id="PTHR48082">
    <property type="entry name" value="ATP SYNTHASE SUBUNIT ALPHA, MITOCHONDRIAL"/>
    <property type="match status" value="1"/>
</dbReference>
<dbReference type="PANTHER" id="PTHR48082:SF2">
    <property type="entry name" value="ATP SYNTHASE SUBUNIT ALPHA, MITOCHONDRIAL"/>
    <property type="match status" value="1"/>
</dbReference>
<dbReference type="Pfam" id="PF00006">
    <property type="entry name" value="ATP-synt_ab"/>
    <property type="match status" value="1"/>
</dbReference>
<dbReference type="Pfam" id="PF00306">
    <property type="entry name" value="ATP-synt_ab_C"/>
    <property type="match status" value="1"/>
</dbReference>
<dbReference type="Pfam" id="PF02874">
    <property type="entry name" value="ATP-synt_ab_N"/>
    <property type="match status" value="1"/>
</dbReference>
<dbReference type="PIRSF" id="PIRSF039088">
    <property type="entry name" value="F_ATPase_subunit_alpha"/>
    <property type="match status" value="1"/>
</dbReference>
<dbReference type="SUPFAM" id="SSF47917">
    <property type="entry name" value="C-terminal domain of alpha and beta subunits of F1 ATP synthase"/>
    <property type="match status" value="1"/>
</dbReference>
<dbReference type="SUPFAM" id="SSF50615">
    <property type="entry name" value="N-terminal domain of alpha and beta subunits of F1 ATP synthase"/>
    <property type="match status" value="1"/>
</dbReference>
<dbReference type="SUPFAM" id="SSF52540">
    <property type="entry name" value="P-loop containing nucleoside triphosphate hydrolases"/>
    <property type="match status" value="1"/>
</dbReference>
<dbReference type="PROSITE" id="PS00152">
    <property type="entry name" value="ATPASE_ALPHA_BETA"/>
    <property type="match status" value="1"/>
</dbReference>
<proteinExistence type="inferred from homology"/>
<evidence type="ECO:0000255" key="1">
    <source>
        <dbReference type="HAMAP-Rule" id="MF_01346"/>
    </source>
</evidence>
<organism>
    <name type="scientific">Nitrosomonas europaea (strain ATCC 19718 / CIP 103999 / KCTC 2705 / NBRC 14298)</name>
    <dbReference type="NCBI Taxonomy" id="228410"/>
    <lineage>
        <taxon>Bacteria</taxon>
        <taxon>Pseudomonadati</taxon>
        <taxon>Pseudomonadota</taxon>
        <taxon>Betaproteobacteria</taxon>
        <taxon>Nitrosomonadales</taxon>
        <taxon>Nitrosomonadaceae</taxon>
        <taxon>Nitrosomonas</taxon>
    </lineage>
</organism>
<name>ATPA_NITEU</name>
<reference key="1">
    <citation type="journal article" date="2003" name="J. Bacteriol.">
        <title>Complete genome sequence of the ammonia-oxidizing bacterium and obligate chemolithoautotroph Nitrosomonas europaea.</title>
        <authorList>
            <person name="Chain P."/>
            <person name="Lamerdin J.E."/>
            <person name="Larimer F.W."/>
            <person name="Regala W."/>
            <person name="Lao V."/>
            <person name="Land M.L."/>
            <person name="Hauser L."/>
            <person name="Hooper A.B."/>
            <person name="Klotz M.G."/>
            <person name="Norton J."/>
            <person name="Sayavedra-Soto L.A."/>
            <person name="Arciero D.M."/>
            <person name="Hommes N.G."/>
            <person name="Whittaker M.M."/>
            <person name="Arp D.J."/>
        </authorList>
    </citation>
    <scope>NUCLEOTIDE SEQUENCE [LARGE SCALE GENOMIC DNA]</scope>
    <source>
        <strain>ATCC 19718 / CIP 103999 / KCTC 2705 / NBRC 14298</strain>
    </source>
</reference>
<protein>
    <recommendedName>
        <fullName evidence="1">ATP synthase subunit alpha</fullName>
        <ecNumber evidence="1">7.1.2.2</ecNumber>
    </recommendedName>
    <alternativeName>
        <fullName evidence="1">ATP synthase F1 sector subunit alpha</fullName>
    </alternativeName>
    <alternativeName>
        <fullName evidence="1">F-ATPase subunit alpha</fullName>
    </alternativeName>
</protein>